<reference key="1">
    <citation type="journal article" date="1994" name="Microbiology">
        <title>Cloning and sequencing of the genes for the proton-translocating nicotinamide nucleotide transhydrogenase from Rhodospirillum rubrum and the implications for the domain structure of the enzyme.</title>
        <authorList>
            <person name="Williams R."/>
            <person name="Cotton N.P."/>
            <person name="Thomas C.M."/>
            <person name="Jackson J.B."/>
        </authorList>
    </citation>
    <scope>NUCLEOTIDE SEQUENCE [GENOMIC DNA]</scope>
</reference>
<reference key="2">
    <citation type="journal article" date="2011" name="Stand. Genomic Sci.">
        <title>Complete genome sequence of Rhodospirillum rubrum type strain (S1).</title>
        <authorList>
            <person name="Munk A.C."/>
            <person name="Copeland A."/>
            <person name="Lucas S."/>
            <person name="Lapidus A."/>
            <person name="Del Rio T.G."/>
            <person name="Barry K."/>
            <person name="Detter J.C."/>
            <person name="Hammon N."/>
            <person name="Israni S."/>
            <person name="Pitluck S."/>
            <person name="Brettin T."/>
            <person name="Bruce D."/>
            <person name="Han C."/>
            <person name="Tapia R."/>
            <person name="Gilna P."/>
            <person name="Schmutz J."/>
            <person name="Larimer F."/>
            <person name="Land M."/>
            <person name="Kyrpides N.C."/>
            <person name="Mavromatis K."/>
            <person name="Richardson P."/>
            <person name="Rohde M."/>
            <person name="Goeker M."/>
            <person name="Klenk H.P."/>
            <person name="Zhang Y."/>
            <person name="Roberts G.P."/>
            <person name="Reslewic S."/>
            <person name="Schwartz D.C."/>
        </authorList>
    </citation>
    <scope>NUCLEOTIDE SEQUENCE [LARGE SCALE GENOMIC DNA]</scope>
    <source>
        <strain>ATCC 11170 / ATH 1.1.1 / DSM 467 / LMG 4362 / NCIMB 8255 / S1</strain>
    </source>
</reference>
<reference evidence="7" key="3">
    <citation type="journal article" date="2003" name="J. Biol. Chem.">
        <title>Interactions between transhydrogenase and thio-nicotinamide Analogues of NAD(H) and NADP(H) underline the importance of nucleotide conformational changes in coupling to proton translocation.</title>
        <authorList>
            <person name="Singh A."/>
            <person name="Venning J.D."/>
            <person name="Quirk P.G."/>
            <person name="van Boxel G.I."/>
            <person name="Rodrigues D.J."/>
            <person name="White S.A."/>
            <person name="Jackson J.B."/>
        </authorList>
    </citation>
    <scope>X-RAY CRYSTALLOGRAPHY (2.61 ANGSTROMS) OF 291-464 IN COMPLEX WITH PNTAA AND SUBSTRATE ANALOG</scope>
    <scope>CATALYTIC ACTIVITY</scope>
</reference>
<reference evidence="8" key="4">
    <citation type="journal article" date="2004" name="Biochemistry">
        <title>Active-site conformational changes associated with hydride transfer in proton-translocating transhydrogenase.</title>
        <authorList>
            <person name="Mather O.C."/>
            <person name="Singh A."/>
            <person name="van Boxel G.I."/>
            <person name="White S.A."/>
            <person name="Jackson J.B."/>
        </authorList>
    </citation>
    <scope>X-RAY CRYSTALLOGRAPHY (2.20 ANGSTROMS) OF 262-464 IN COMPLEX WITH PNTAA AND NADP</scope>
</reference>
<name>PNTB_RHORT</name>
<sequence>MTHSLTMAAYIVAGVLFILALRGLSNPESARNGNRMGMVGMAIAILTTLLSPSVQAYAWIVLAIAIGGAIGTVIAKKVLMTALPQLVAAFHSLVGMAAVLVATGALLNPEAYGIGSAGAIHAGSLVEMSLGLAVGAITFSGSVIAFGKLQGLIAGKPVTFPMQHPLNAVLGILLVVLLVVFAATESHTAYFALMILAFALGFLLIIPIGGADMPVVISMLNSYSGWAAAGIGFTLGNPLLIIAGALVGSSGAILSYIMCKGMNRSIFNVILGGFGSEGGVAAAGGAAGDRSVKAGSAEDAAFIMKNASKVIIVPGYGMAVAQAQHALREMADVLKKEGVEVSYAIHPVAGRMPGHMNVLLAEANVPYDEVFELEEINSSFQTADVAFVIGANDVTNPAAKTDPSSPIYGMPILDVEKAGTVLFIKRSMASGYAGVENELFFRNNTMMLFGDAKKMTEQIVQAMN</sequence>
<organism>
    <name type="scientific">Rhodospirillum rubrum (strain ATCC 11170 / ATH 1.1.1 / DSM 467 / LMG 4362 / NCIMB 8255 / S1)</name>
    <dbReference type="NCBI Taxonomy" id="269796"/>
    <lineage>
        <taxon>Bacteria</taxon>
        <taxon>Pseudomonadati</taxon>
        <taxon>Pseudomonadota</taxon>
        <taxon>Alphaproteobacteria</taxon>
        <taxon>Rhodospirillales</taxon>
        <taxon>Rhodospirillaceae</taxon>
        <taxon>Rhodospirillum</taxon>
    </lineage>
</organism>
<dbReference type="EC" id="7.1.1.1"/>
<dbReference type="EMBL" id="U05294">
    <property type="protein sequence ID" value="AAA62495.1"/>
    <property type="molecule type" value="Genomic_DNA"/>
</dbReference>
<dbReference type="EMBL" id="CP000230">
    <property type="protein sequence ID" value="ABC22981.1"/>
    <property type="molecule type" value="Genomic_DNA"/>
</dbReference>
<dbReference type="RefSeq" id="WP_011390030.1">
    <property type="nucleotide sequence ID" value="NC_007643.1"/>
</dbReference>
<dbReference type="RefSeq" id="YP_427268.1">
    <property type="nucleotide sequence ID" value="NC_007643.1"/>
</dbReference>
<dbReference type="PDB" id="1E3T">
    <property type="method" value="NMR"/>
    <property type="chains" value="A=262-464"/>
</dbReference>
<dbReference type="PDB" id="1HZZ">
    <property type="method" value="X-ray"/>
    <property type="resolution" value="2.50 A"/>
    <property type="chains" value="C=262-464"/>
</dbReference>
<dbReference type="PDB" id="1NM5">
    <property type="method" value="X-ray"/>
    <property type="resolution" value="2.40 A"/>
    <property type="chains" value="C=262-464"/>
</dbReference>
<dbReference type="PDB" id="1PNO">
    <property type="method" value="X-ray"/>
    <property type="resolution" value="2.10 A"/>
    <property type="chains" value="A/B=294-464"/>
</dbReference>
<dbReference type="PDB" id="1PNQ">
    <property type="method" value="X-ray"/>
    <property type="resolution" value="2.40 A"/>
    <property type="chains" value="A/B=294-464"/>
</dbReference>
<dbReference type="PDB" id="1PTJ">
    <property type="method" value="X-ray"/>
    <property type="resolution" value="2.61 A"/>
    <property type="chains" value="C=291-464"/>
</dbReference>
<dbReference type="PDB" id="1U28">
    <property type="method" value="X-ray"/>
    <property type="resolution" value="2.30 A"/>
    <property type="chains" value="C=262-464"/>
</dbReference>
<dbReference type="PDB" id="1U2D">
    <property type="method" value="X-ray"/>
    <property type="resolution" value="3.00 A"/>
    <property type="chains" value="C=262-464"/>
</dbReference>
<dbReference type="PDB" id="1U2G">
    <property type="method" value="X-ray"/>
    <property type="resolution" value="2.20 A"/>
    <property type="chains" value="C=262-464"/>
</dbReference>
<dbReference type="PDB" id="1XLT">
    <property type="method" value="X-ray"/>
    <property type="resolution" value="3.10 A"/>
    <property type="chains" value="C/F/I=294-464"/>
</dbReference>
<dbReference type="PDBsum" id="1E3T"/>
<dbReference type="PDBsum" id="1HZZ"/>
<dbReference type="PDBsum" id="1NM5"/>
<dbReference type="PDBsum" id="1PNO"/>
<dbReference type="PDBsum" id="1PNQ"/>
<dbReference type="PDBsum" id="1PTJ"/>
<dbReference type="PDBsum" id="1U28"/>
<dbReference type="PDBsum" id="1U2D"/>
<dbReference type="PDBsum" id="1U2G"/>
<dbReference type="PDBsum" id="1XLT"/>
<dbReference type="BMRB" id="Q2RSB4"/>
<dbReference type="SMR" id="Q2RSB4"/>
<dbReference type="STRING" id="269796.Rru_A2181"/>
<dbReference type="EnsemblBacteria" id="ABC22981">
    <property type="protein sequence ID" value="ABC22981"/>
    <property type="gene ID" value="Rru_A2181"/>
</dbReference>
<dbReference type="KEGG" id="rru:Rru_A2181"/>
<dbReference type="PATRIC" id="fig|269796.9.peg.2275"/>
<dbReference type="eggNOG" id="COG1282">
    <property type="taxonomic scope" value="Bacteria"/>
</dbReference>
<dbReference type="HOGENOM" id="CLU_007866_4_0_5"/>
<dbReference type="PhylomeDB" id="Q2RSB4"/>
<dbReference type="BRENDA" id="1.6.1.2">
    <property type="organism ID" value="5420"/>
</dbReference>
<dbReference type="EvolutionaryTrace" id="Q2RSB4"/>
<dbReference type="Proteomes" id="UP000001929">
    <property type="component" value="Chromosome"/>
</dbReference>
<dbReference type="GO" id="GO:0005886">
    <property type="term" value="C:plasma membrane"/>
    <property type="evidence" value="ECO:0007669"/>
    <property type="project" value="UniProtKB-SubCell"/>
</dbReference>
<dbReference type="GO" id="GO:0050661">
    <property type="term" value="F:NADP binding"/>
    <property type="evidence" value="ECO:0007669"/>
    <property type="project" value="InterPro"/>
</dbReference>
<dbReference type="GO" id="GO:0008750">
    <property type="term" value="F:proton-translocating NAD(P)+ transhydrogenase activity"/>
    <property type="evidence" value="ECO:0007669"/>
    <property type="project" value="UniProtKB-EC"/>
</dbReference>
<dbReference type="FunFam" id="3.40.50.1220:FF:000002">
    <property type="entry name" value="NAD(P) transhydrogenase subunit beta"/>
    <property type="match status" value="1"/>
</dbReference>
<dbReference type="Gene3D" id="3.40.50.1220">
    <property type="entry name" value="TPP-binding domain"/>
    <property type="match status" value="1"/>
</dbReference>
<dbReference type="InterPro" id="IPR029035">
    <property type="entry name" value="DHS-like_NAD/FAD-binding_dom"/>
</dbReference>
<dbReference type="InterPro" id="IPR012136">
    <property type="entry name" value="NADH_DH_b"/>
</dbReference>
<dbReference type="InterPro" id="IPR034300">
    <property type="entry name" value="PNTB-like"/>
</dbReference>
<dbReference type="PANTHER" id="PTHR44758">
    <property type="entry name" value="NAD(P) TRANSHYDROGENASE SUBUNIT BETA"/>
    <property type="match status" value="1"/>
</dbReference>
<dbReference type="PANTHER" id="PTHR44758:SF1">
    <property type="entry name" value="NAD(P) TRANSHYDROGENASE SUBUNIT BETA"/>
    <property type="match status" value="1"/>
</dbReference>
<dbReference type="Pfam" id="PF02233">
    <property type="entry name" value="PNTB"/>
    <property type="match status" value="1"/>
</dbReference>
<dbReference type="PIRSF" id="PIRSF000204">
    <property type="entry name" value="PNTB"/>
    <property type="match status" value="1"/>
</dbReference>
<dbReference type="SUPFAM" id="SSF52467">
    <property type="entry name" value="DHS-like NAD/FAD-binding domain"/>
    <property type="match status" value="1"/>
</dbReference>
<feature type="chain" id="PRO_0000231665" description="NAD(P) transhydrogenase subunit beta">
    <location>
        <begin position="1"/>
        <end position="464"/>
    </location>
</feature>
<feature type="transmembrane region" description="Helical" evidence="3">
    <location>
        <begin position="54"/>
        <end position="74"/>
    </location>
</feature>
<feature type="transmembrane region" description="Helical" evidence="3">
    <location>
        <begin position="86"/>
        <end position="106"/>
    </location>
</feature>
<feature type="transmembrane region" description="Helical" evidence="3">
    <location>
        <begin position="126"/>
        <end position="146"/>
    </location>
</feature>
<feature type="transmembrane region" description="Helical" evidence="3">
    <location>
        <begin position="164"/>
        <end position="184"/>
    </location>
</feature>
<feature type="transmembrane region" description="Helical" evidence="3">
    <location>
        <begin position="191"/>
        <end position="211"/>
    </location>
</feature>
<feature type="transmembrane region" description="Helical" evidence="3">
    <location>
        <begin position="227"/>
        <end position="247"/>
    </location>
</feature>
<feature type="binding site" evidence="4 5 7 8">
    <location>
        <begin position="316"/>
        <end position="317"/>
    </location>
    <ligand>
        <name>NADP(+)</name>
        <dbReference type="ChEBI" id="CHEBI:58349"/>
    </ligand>
</feature>
<feature type="binding site" evidence="4 5 7 8">
    <location>
        <begin position="348"/>
        <end position="353"/>
    </location>
    <ligand>
        <name>NADP(+)</name>
        <dbReference type="ChEBI" id="CHEBI:58349"/>
    </ligand>
</feature>
<feature type="binding site" evidence="4 5 7 8">
    <location>
        <begin position="390"/>
        <end position="394"/>
    </location>
    <ligand>
        <name>NADP(+)</name>
        <dbReference type="ChEBI" id="CHEBI:58349"/>
    </ligand>
</feature>
<feature type="binding site" evidence="4 5 7 8">
    <location>
        <begin position="425"/>
        <end position="432"/>
    </location>
    <ligand>
        <name>NADP(+)</name>
        <dbReference type="ChEBI" id="CHEBI:58349"/>
    </ligand>
</feature>
<feature type="binding site" evidence="4 5 7 8">
    <location>
        <begin position="451"/>
        <end position="452"/>
    </location>
    <ligand>
        <name>NADP(+)</name>
        <dbReference type="ChEBI" id="CHEBI:58349"/>
    </ligand>
</feature>
<feature type="helix" evidence="9">
    <location>
        <begin position="297"/>
        <end position="305"/>
    </location>
</feature>
<feature type="strand" evidence="9">
    <location>
        <begin position="308"/>
        <end position="314"/>
    </location>
</feature>
<feature type="helix" evidence="9">
    <location>
        <begin position="316"/>
        <end position="321"/>
    </location>
</feature>
<feature type="helix" evidence="9">
    <location>
        <begin position="324"/>
        <end position="336"/>
    </location>
</feature>
<feature type="strand" evidence="9">
    <location>
        <begin position="340"/>
        <end position="345"/>
    </location>
</feature>
<feature type="strand" evidence="11">
    <location>
        <begin position="350"/>
        <end position="352"/>
    </location>
</feature>
<feature type="helix" evidence="9">
    <location>
        <begin position="355"/>
        <end position="362"/>
    </location>
</feature>
<feature type="helix" evidence="9">
    <location>
        <begin position="367"/>
        <end position="369"/>
    </location>
</feature>
<feature type="strand" evidence="9">
    <location>
        <begin position="370"/>
        <end position="372"/>
    </location>
</feature>
<feature type="helix" evidence="9">
    <location>
        <begin position="373"/>
        <end position="376"/>
    </location>
</feature>
<feature type="helix" evidence="9">
    <location>
        <begin position="377"/>
        <end position="382"/>
    </location>
</feature>
<feature type="strand" evidence="9">
    <location>
        <begin position="384"/>
        <end position="390"/>
    </location>
</feature>
<feature type="helix" evidence="9">
    <location>
        <begin position="393"/>
        <end position="395"/>
    </location>
</feature>
<feature type="helix" evidence="9">
    <location>
        <begin position="397"/>
        <end position="399"/>
    </location>
</feature>
<feature type="strand" evidence="10">
    <location>
        <begin position="403"/>
        <end position="405"/>
    </location>
</feature>
<feature type="turn" evidence="9">
    <location>
        <begin position="406"/>
        <end position="409"/>
    </location>
</feature>
<feature type="helix" evidence="9">
    <location>
        <begin position="415"/>
        <end position="417"/>
    </location>
</feature>
<feature type="strand" evidence="9">
    <location>
        <begin position="418"/>
        <end position="428"/>
    </location>
</feature>
<feature type="helix" evidence="9">
    <location>
        <begin position="438"/>
        <end position="440"/>
    </location>
</feature>
<feature type="strand" evidence="9">
    <location>
        <begin position="445"/>
        <end position="450"/>
    </location>
</feature>
<feature type="helix" evidence="9">
    <location>
        <begin position="452"/>
        <end position="463"/>
    </location>
</feature>
<accession>Q2RSB4</accession>
<accession>Q59763</accession>
<accession>Q59765</accession>
<keyword id="KW-0002">3D-structure</keyword>
<keyword id="KW-0997">Cell inner membrane</keyword>
<keyword id="KW-1003">Cell membrane</keyword>
<keyword id="KW-0472">Membrane</keyword>
<keyword id="KW-0520">NAD</keyword>
<keyword id="KW-0521">NADP</keyword>
<keyword id="KW-0547">Nucleotide-binding</keyword>
<keyword id="KW-1185">Reference proteome</keyword>
<keyword id="KW-1278">Translocase</keyword>
<keyword id="KW-0812">Transmembrane</keyword>
<keyword id="KW-1133">Transmembrane helix</keyword>
<gene>
    <name type="primary">pntB</name>
    <name type="synonym">nntB</name>
    <name type="ordered locus">Rru_A2181</name>
</gene>
<evidence type="ECO:0000250" key="1"/>
<evidence type="ECO:0000250" key="2">
    <source>
        <dbReference type="UniProtKB" id="P07001"/>
    </source>
</evidence>
<evidence type="ECO:0000255" key="3"/>
<evidence type="ECO:0000269" key="4">
    <source>
    </source>
</evidence>
<evidence type="ECO:0000269" key="5">
    <source>
    </source>
</evidence>
<evidence type="ECO:0000305" key="6"/>
<evidence type="ECO:0007744" key="7">
    <source>
        <dbReference type="PDB" id="1PTJ"/>
    </source>
</evidence>
<evidence type="ECO:0007744" key="8">
    <source>
        <dbReference type="PDB" id="1U2G"/>
    </source>
</evidence>
<evidence type="ECO:0007829" key="9">
    <source>
        <dbReference type="PDB" id="1PNO"/>
    </source>
</evidence>
<evidence type="ECO:0007829" key="10">
    <source>
        <dbReference type="PDB" id="1U28"/>
    </source>
</evidence>
<evidence type="ECO:0007829" key="11">
    <source>
        <dbReference type="PDB" id="1U2G"/>
    </source>
</evidence>
<proteinExistence type="evidence at protein level"/>
<protein>
    <recommendedName>
        <fullName>NAD(P) transhydrogenase subunit beta</fullName>
        <ecNumber>7.1.1.1</ecNumber>
    </recommendedName>
    <alternativeName>
        <fullName>Nicotinamide nucleotide transhydrogenase subunit beta</fullName>
    </alternativeName>
    <alternativeName>
        <fullName>Proton-translocating transhydrogenase NADP(H)-binding component</fullName>
    </alternativeName>
    <alternativeName>
        <fullName>Pyridine nucleotide transhydrogenase subunit beta</fullName>
    </alternativeName>
    <alternativeName>
        <fullName>dIII</fullName>
    </alternativeName>
</protein>
<comment type="function">
    <text evidence="2">The transhydrogenation between NADH and NADP is coupled to respiration and ATP hydrolysis and functions as a proton pump across the membrane.</text>
</comment>
<comment type="catalytic activity">
    <reaction evidence="4">
        <text>NAD(+) + NADPH + H(+)(in) = NADH + NADP(+) + H(+)(out)</text>
        <dbReference type="Rhea" id="RHEA:47992"/>
        <dbReference type="ChEBI" id="CHEBI:15378"/>
        <dbReference type="ChEBI" id="CHEBI:57540"/>
        <dbReference type="ChEBI" id="CHEBI:57783"/>
        <dbReference type="ChEBI" id="CHEBI:57945"/>
        <dbReference type="ChEBI" id="CHEBI:58349"/>
        <dbReference type="EC" id="7.1.1.1"/>
    </reaction>
</comment>
<comment type="subunit">
    <text evidence="1">Complex of an alpha and a beta chain; in Rhodospirillum, the alpha chain seems to be made of two subunits.</text>
</comment>
<comment type="subcellular location">
    <subcellularLocation>
        <location evidence="1">Cell inner membrane</location>
        <topology evidence="1">Multi-pass membrane protein</topology>
    </subcellularLocation>
</comment>
<comment type="similarity">
    <text evidence="6">Belongs to the PNT beta subunit family.</text>
</comment>